<reference key="1">
    <citation type="journal article" date="2004" name="FEBS Lett.">
        <title>Evidence against requirement of Ser41 and Ser45 for function of PU.1: molecular cloning of rat PU.1.</title>
        <authorList>
            <person name="Nishiyama C."/>
            <person name="Masuoka N."/>
            <person name="Nishiyama M."/>
            <person name="Ito T."/>
            <person name="Yamane H."/>
            <person name="Okumura K."/>
            <person name="Ogawa H."/>
        </authorList>
    </citation>
    <scope>NUCLEOTIDE SEQUENCE [MRNA]</scope>
    <scope>FUNCTION AS A TRANSCRIPTION FACTOR</scope>
    <scope>MUTAGENESIS OF GLY-41 AND SER-45</scope>
</reference>
<reference key="2">
    <citation type="journal article" date="2004" name="Genome Res.">
        <title>The status, quality, and expansion of the NIH full-length cDNA project: the Mammalian Gene Collection (MGC).</title>
        <authorList>
            <consortium name="The MGC Project Team"/>
        </authorList>
    </citation>
    <scope>NUCLEOTIDE SEQUENCE [LARGE SCALE MRNA]</scope>
    <source>
        <tissue>Spleen</tissue>
    </source>
</reference>
<keyword id="KW-0010">Activator</keyword>
<keyword id="KW-0217">Developmental protein</keyword>
<keyword id="KW-0238">DNA-binding</keyword>
<keyword id="KW-0539">Nucleus</keyword>
<keyword id="KW-0597">Phosphoprotein</keyword>
<keyword id="KW-1185">Reference proteome</keyword>
<keyword id="KW-0694">RNA-binding</keyword>
<keyword id="KW-0804">Transcription</keyword>
<keyword id="KW-0805">Transcription regulation</keyword>
<evidence type="ECO:0000250" key="1">
    <source>
        <dbReference type="UniProtKB" id="P17433"/>
    </source>
</evidence>
<evidence type="ECO:0000250" key="2">
    <source>
        <dbReference type="UniProtKB" id="P17947"/>
    </source>
</evidence>
<evidence type="ECO:0000255" key="3">
    <source>
        <dbReference type="PROSITE-ProRule" id="PRU00237"/>
    </source>
</evidence>
<evidence type="ECO:0000256" key="4">
    <source>
        <dbReference type="SAM" id="MobiDB-lite"/>
    </source>
</evidence>
<evidence type="ECO:0000269" key="5">
    <source>
    </source>
</evidence>
<evidence type="ECO:0000305" key="6"/>
<name>SPI1_RAT</name>
<gene>
    <name type="primary">Spi1</name>
    <name type="synonym">Sfpi1</name>
</gene>
<dbReference type="EMBL" id="AB154364">
    <property type="protein sequence ID" value="BAD35169.1"/>
    <property type="molecule type" value="mRNA"/>
</dbReference>
<dbReference type="EMBL" id="BC091185">
    <property type="protein sequence ID" value="AAH91185.1"/>
    <property type="molecule type" value="mRNA"/>
</dbReference>
<dbReference type="RefSeq" id="NP_001005892.1">
    <property type="nucleotide sequence ID" value="NM_001005892.2"/>
</dbReference>
<dbReference type="SMR" id="Q6BDS1"/>
<dbReference type="BioGRID" id="265745">
    <property type="interactions" value="1"/>
</dbReference>
<dbReference type="FunCoup" id="Q6BDS1">
    <property type="interactions" value="492"/>
</dbReference>
<dbReference type="IntAct" id="Q6BDS1">
    <property type="interactions" value="1"/>
</dbReference>
<dbReference type="STRING" id="10116.ENSRNOP00000016306"/>
<dbReference type="iPTMnet" id="Q6BDS1"/>
<dbReference type="PhosphoSitePlus" id="Q6BDS1"/>
<dbReference type="PaxDb" id="10116-ENSRNOP00000016306"/>
<dbReference type="GeneID" id="366126"/>
<dbReference type="KEGG" id="rno:366126"/>
<dbReference type="UCSC" id="RGD:1359607">
    <property type="organism name" value="rat"/>
</dbReference>
<dbReference type="AGR" id="RGD:1359607"/>
<dbReference type="CTD" id="6688"/>
<dbReference type="RGD" id="1359607">
    <property type="gene designation" value="Spi1"/>
</dbReference>
<dbReference type="VEuPathDB" id="HostDB:ENSRNOG00000012172"/>
<dbReference type="eggNOG" id="KOG3805">
    <property type="taxonomic scope" value="Eukaryota"/>
</dbReference>
<dbReference type="HOGENOM" id="CLU_066451_0_0_1"/>
<dbReference type="InParanoid" id="Q6BDS1"/>
<dbReference type="OrthoDB" id="10043646at2759"/>
<dbReference type="PhylomeDB" id="Q6BDS1"/>
<dbReference type="TreeFam" id="TF352494"/>
<dbReference type="PRO" id="PR:Q6BDS1"/>
<dbReference type="Proteomes" id="UP000002494">
    <property type="component" value="Chromosome 3"/>
</dbReference>
<dbReference type="Bgee" id="ENSRNOG00000012172">
    <property type="expression patterns" value="Expressed in spleen and 18 other cell types or tissues"/>
</dbReference>
<dbReference type="GO" id="GO:0000785">
    <property type="term" value="C:chromatin"/>
    <property type="evidence" value="ECO:0000266"/>
    <property type="project" value="RGD"/>
</dbReference>
<dbReference type="GO" id="GO:0005654">
    <property type="term" value="C:nucleoplasm"/>
    <property type="evidence" value="ECO:0007669"/>
    <property type="project" value="Ensembl"/>
</dbReference>
<dbReference type="GO" id="GO:0005634">
    <property type="term" value="C:nucleus"/>
    <property type="evidence" value="ECO:0000266"/>
    <property type="project" value="RGD"/>
</dbReference>
<dbReference type="GO" id="GO:0005667">
    <property type="term" value="C:transcription regulator complex"/>
    <property type="evidence" value="ECO:0000266"/>
    <property type="project" value="RGD"/>
</dbReference>
<dbReference type="GO" id="GO:0003682">
    <property type="term" value="F:chromatin binding"/>
    <property type="evidence" value="ECO:0000266"/>
    <property type="project" value="RGD"/>
</dbReference>
<dbReference type="GO" id="GO:0000987">
    <property type="term" value="F:cis-regulatory region sequence-specific DNA binding"/>
    <property type="evidence" value="ECO:0000266"/>
    <property type="project" value="RGD"/>
</dbReference>
<dbReference type="GO" id="GO:0003677">
    <property type="term" value="F:DNA binding"/>
    <property type="evidence" value="ECO:0000266"/>
    <property type="project" value="RGD"/>
</dbReference>
<dbReference type="GO" id="GO:0001216">
    <property type="term" value="F:DNA-binding transcription activator activity"/>
    <property type="evidence" value="ECO:0000266"/>
    <property type="project" value="RGD"/>
</dbReference>
<dbReference type="GO" id="GO:0001228">
    <property type="term" value="F:DNA-binding transcription activator activity, RNA polymerase II-specific"/>
    <property type="evidence" value="ECO:0000266"/>
    <property type="project" value="RGD"/>
</dbReference>
<dbReference type="GO" id="GO:0003700">
    <property type="term" value="F:DNA-binding transcription factor activity"/>
    <property type="evidence" value="ECO:0000314"/>
    <property type="project" value="RGD"/>
</dbReference>
<dbReference type="GO" id="GO:0000981">
    <property type="term" value="F:DNA-binding transcription factor activity, RNA polymerase II-specific"/>
    <property type="evidence" value="ECO:0000266"/>
    <property type="project" value="RGD"/>
</dbReference>
<dbReference type="GO" id="GO:0140297">
    <property type="term" value="F:DNA-binding transcription factor binding"/>
    <property type="evidence" value="ECO:0000266"/>
    <property type="project" value="RGD"/>
</dbReference>
<dbReference type="GO" id="GO:0001217">
    <property type="term" value="F:DNA-binding transcription repressor activity"/>
    <property type="evidence" value="ECO:0000266"/>
    <property type="project" value="RGD"/>
</dbReference>
<dbReference type="GO" id="GO:0001227">
    <property type="term" value="F:DNA-binding transcription repressor activity, RNA polymerase II-specific"/>
    <property type="evidence" value="ECO:0000266"/>
    <property type="project" value="RGD"/>
</dbReference>
<dbReference type="GO" id="GO:0042826">
    <property type="term" value="F:histone deacetylase binding"/>
    <property type="evidence" value="ECO:0000266"/>
    <property type="project" value="RGD"/>
</dbReference>
<dbReference type="GO" id="GO:0051525">
    <property type="term" value="F:NFAT protein binding"/>
    <property type="evidence" value="ECO:0000266"/>
    <property type="project" value="RGD"/>
</dbReference>
<dbReference type="GO" id="GO:0140311">
    <property type="term" value="F:protein sequestering activity"/>
    <property type="evidence" value="ECO:0000266"/>
    <property type="project" value="RGD"/>
</dbReference>
<dbReference type="GO" id="GO:0003723">
    <property type="term" value="F:RNA binding"/>
    <property type="evidence" value="ECO:0007669"/>
    <property type="project" value="UniProtKB-KW"/>
</dbReference>
<dbReference type="GO" id="GO:0000978">
    <property type="term" value="F:RNA polymerase II cis-regulatory region sequence-specific DNA binding"/>
    <property type="evidence" value="ECO:0000266"/>
    <property type="project" value="RGD"/>
</dbReference>
<dbReference type="GO" id="GO:0061629">
    <property type="term" value="F:RNA polymerase II-specific DNA-binding transcription factor binding"/>
    <property type="evidence" value="ECO:0000266"/>
    <property type="project" value="RGD"/>
</dbReference>
<dbReference type="GO" id="GO:0043565">
    <property type="term" value="F:sequence-specific DNA binding"/>
    <property type="evidence" value="ECO:0000314"/>
    <property type="project" value="RGD"/>
</dbReference>
<dbReference type="GO" id="GO:0097677">
    <property type="term" value="F:STAT family protein binding"/>
    <property type="evidence" value="ECO:0000266"/>
    <property type="project" value="RGD"/>
</dbReference>
<dbReference type="GO" id="GO:0000976">
    <property type="term" value="F:transcription cis-regulatory region binding"/>
    <property type="evidence" value="ECO:0000266"/>
    <property type="project" value="RGD"/>
</dbReference>
<dbReference type="GO" id="GO:0060033">
    <property type="term" value="P:anatomical structure regression"/>
    <property type="evidence" value="ECO:0000266"/>
    <property type="project" value="RGD"/>
</dbReference>
<dbReference type="GO" id="GO:1902262">
    <property type="term" value="P:apoptotic process involved in blood vessel morphogenesis"/>
    <property type="evidence" value="ECO:0000266"/>
    <property type="project" value="RGD"/>
</dbReference>
<dbReference type="GO" id="GO:0030154">
    <property type="term" value="P:cell differentiation"/>
    <property type="evidence" value="ECO:0000318"/>
    <property type="project" value="GO_Central"/>
</dbReference>
<dbReference type="GO" id="GO:0071361">
    <property type="term" value="P:cellular response to ethanol"/>
    <property type="evidence" value="ECO:0000270"/>
    <property type="project" value="RGD"/>
</dbReference>
<dbReference type="GO" id="GO:0002357">
    <property type="term" value="P:defense response to tumor cell"/>
    <property type="evidence" value="ECO:0000266"/>
    <property type="project" value="RGD"/>
</dbReference>
<dbReference type="GO" id="GO:0098508">
    <property type="term" value="P:endothelial to hematopoietic transition"/>
    <property type="evidence" value="ECO:0000266"/>
    <property type="project" value="RGD"/>
</dbReference>
<dbReference type="GO" id="GO:0030218">
    <property type="term" value="P:erythrocyte differentiation"/>
    <property type="evidence" value="ECO:0000266"/>
    <property type="project" value="RGD"/>
</dbReference>
<dbReference type="GO" id="GO:0002316">
    <property type="term" value="P:follicular B cell differentiation"/>
    <property type="evidence" value="ECO:0000266"/>
    <property type="project" value="RGD"/>
</dbReference>
<dbReference type="GO" id="GO:0002314">
    <property type="term" value="P:germinal center B cell differentiation"/>
    <property type="evidence" value="ECO:0000266"/>
    <property type="project" value="RGD"/>
</dbReference>
<dbReference type="GO" id="GO:0030851">
    <property type="term" value="P:granulocyte differentiation"/>
    <property type="evidence" value="ECO:0000266"/>
    <property type="project" value="RGD"/>
</dbReference>
<dbReference type="GO" id="GO:0002327">
    <property type="term" value="P:immature B cell differentiation"/>
    <property type="evidence" value="ECO:0000266"/>
    <property type="project" value="RGD"/>
</dbReference>
<dbReference type="GO" id="GO:0070102">
    <property type="term" value="P:interleukin-6-mediated signaling pathway"/>
    <property type="evidence" value="ECO:0000266"/>
    <property type="project" value="RGD"/>
</dbReference>
<dbReference type="GO" id="GO:0031663">
    <property type="term" value="P:lipopolysaccharide-mediated signaling pathway"/>
    <property type="evidence" value="ECO:0000266"/>
    <property type="project" value="RGD"/>
</dbReference>
<dbReference type="GO" id="GO:0030098">
    <property type="term" value="P:lymphocyte differentiation"/>
    <property type="evidence" value="ECO:0000266"/>
    <property type="project" value="RGD"/>
</dbReference>
<dbReference type="GO" id="GO:0002320">
    <property type="term" value="P:lymphoid progenitor cell differentiation"/>
    <property type="evidence" value="ECO:0000266"/>
    <property type="project" value="RGD"/>
</dbReference>
<dbReference type="GO" id="GO:0030225">
    <property type="term" value="P:macrophage differentiation"/>
    <property type="evidence" value="ECO:0000266"/>
    <property type="project" value="RGD"/>
</dbReference>
<dbReference type="GO" id="GO:0043011">
    <property type="term" value="P:myeloid dendritic cell differentiation"/>
    <property type="evidence" value="ECO:0000266"/>
    <property type="project" value="RGD"/>
</dbReference>
<dbReference type="GO" id="GO:0002573">
    <property type="term" value="P:myeloid leukocyte differentiation"/>
    <property type="evidence" value="ECO:0000266"/>
    <property type="project" value="RGD"/>
</dbReference>
<dbReference type="GO" id="GO:1904178">
    <property type="term" value="P:negative regulation of adipose tissue development"/>
    <property type="evidence" value="ECO:0000266"/>
    <property type="project" value="RGD"/>
</dbReference>
<dbReference type="GO" id="GO:0043124">
    <property type="term" value="P:negative regulation of canonical NF-kappaB signal transduction"/>
    <property type="evidence" value="ECO:0007669"/>
    <property type="project" value="Ensembl"/>
</dbReference>
<dbReference type="GO" id="GO:0045892">
    <property type="term" value="P:negative regulation of DNA-templated transcription"/>
    <property type="evidence" value="ECO:0000314"/>
    <property type="project" value="RGD"/>
</dbReference>
<dbReference type="GO" id="GO:0010629">
    <property type="term" value="P:negative regulation of gene expression"/>
    <property type="evidence" value="ECO:0000266"/>
    <property type="project" value="RGD"/>
</dbReference>
<dbReference type="GO" id="GO:0045347">
    <property type="term" value="P:negative regulation of MHC class II biosynthetic process"/>
    <property type="evidence" value="ECO:0000266"/>
    <property type="project" value="RGD"/>
</dbReference>
<dbReference type="GO" id="GO:0043314">
    <property type="term" value="P:negative regulation of neutrophil degranulation"/>
    <property type="evidence" value="ECO:0000266"/>
    <property type="project" value="RGD"/>
</dbReference>
<dbReference type="GO" id="GO:1901223">
    <property type="term" value="P:negative regulation of non-canonical NF-kappaB signal transduction"/>
    <property type="evidence" value="ECO:0000266"/>
    <property type="project" value="RGD"/>
</dbReference>
<dbReference type="GO" id="GO:0120186">
    <property type="term" value="P:negative regulation of protein localization to chromatin"/>
    <property type="evidence" value="ECO:0000266"/>
    <property type="project" value="RGD"/>
</dbReference>
<dbReference type="GO" id="GO:0000122">
    <property type="term" value="P:negative regulation of transcription by RNA polymerase II"/>
    <property type="evidence" value="ECO:0000266"/>
    <property type="project" value="RGD"/>
</dbReference>
<dbReference type="GO" id="GO:0090402">
    <property type="term" value="P:oncogene-induced cell senescence"/>
    <property type="evidence" value="ECO:0000266"/>
    <property type="project" value="RGD"/>
</dbReference>
<dbReference type="GO" id="GO:0030316">
    <property type="term" value="P:osteoclast differentiation"/>
    <property type="evidence" value="ECO:0000270"/>
    <property type="project" value="RGD"/>
</dbReference>
<dbReference type="GO" id="GO:1904238">
    <property type="term" value="P:pericyte cell differentiation"/>
    <property type="evidence" value="ECO:0000266"/>
    <property type="project" value="RGD"/>
</dbReference>
<dbReference type="GO" id="GO:1905036">
    <property type="term" value="P:positive regulation of antifungal innate immune response"/>
    <property type="evidence" value="ECO:0000266"/>
    <property type="project" value="RGD"/>
</dbReference>
<dbReference type="GO" id="GO:0045579">
    <property type="term" value="P:positive regulation of B cell differentiation"/>
    <property type="evidence" value="ECO:0000250"/>
    <property type="project" value="UniProtKB"/>
</dbReference>
<dbReference type="GO" id="GO:0045893">
    <property type="term" value="P:positive regulation of DNA-templated transcription"/>
    <property type="evidence" value="ECO:0000315"/>
    <property type="project" value="RGD"/>
</dbReference>
<dbReference type="GO" id="GO:0010628">
    <property type="term" value="P:positive regulation of gene expression"/>
    <property type="evidence" value="ECO:0000266"/>
    <property type="project" value="RGD"/>
</dbReference>
<dbReference type="GO" id="GO:1904151">
    <property type="term" value="P:positive regulation of microglial cell mediated cytotoxicity"/>
    <property type="evidence" value="ECO:0000266"/>
    <property type="project" value="RGD"/>
</dbReference>
<dbReference type="GO" id="GO:1902895">
    <property type="term" value="P:positive regulation of miRNA transcription"/>
    <property type="evidence" value="ECO:0000266"/>
    <property type="project" value="RGD"/>
</dbReference>
<dbReference type="GO" id="GO:2000529">
    <property type="term" value="P:positive regulation of myeloid dendritic cell chemotaxis"/>
    <property type="evidence" value="ECO:0000266"/>
    <property type="project" value="RGD"/>
</dbReference>
<dbReference type="GO" id="GO:1900745">
    <property type="term" value="P:positive regulation of p38MAPK cascade"/>
    <property type="evidence" value="ECO:0000266"/>
    <property type="project" value="RGD"/>
</dbReference>
<dbReference type="GO" id="GO:0045944">
    <property type="term" value="P:positive regulation of transcription by RNA polymerase II"/>
    <property type="evidence" value="ECO:0000266"/>
    <property type="project" value="RGD"/>
</dbReference>
<dbReference type="GO" id="GO:0002572">
    <property type="term" value="P:pro-T cell differentiation"/>
    <property type="evidence" value="ECO:0000266"/>
    <property type="project" value="RGD"/>
</dbReference>
<dbReference type="GO" id="GO:0006355">
    <property type="term" value="P:regulation of DNA-templated transcription"/>
    <property type="evidence" value="ECO:0000266"/>
    <property type="project" value="RGD"/>
</dbReference>
<dbReference type="GO" id="GO:0045646">
    <property type="term" value="P:regulation of erythrocyte differentiation"/>
    <property type="evidence" value="ECO:0000266"/>
    <property type="project" value="RGD"/>
</dbReference>
<dbReference type="GO" id="GO:1905453">
    <property type="term" value="P:regulation of myeloid progenitor cell differentiation"/>
    <property type="evidence" value="ECO:0000266"/>
    <property type="project" value="RGD"/>
</dbReference>
<dbReference type="GO" id="GO:0006357">
    <property type="term" value="P:regulation of transcription by RNA polymerase II"/>
    <property type="evidence" value="ECO:0000266"/>
    <property type="project" value="RGD"/>
</dbReference>
<dbReference type="GO" id="GO:0045471">
    <property type="term" value="P:response to ethanol"/>
    <property type="evidence" value="ECO:0000270"/>
    <property type="project" value="RGD"/>
</dbReference>
<dbReference type="GO" id="GO:0035019">
    <property type="term" value="P:somatic stem cell population maintenance"/>
    <property type="evidence" value="ECO:0000266"/>
    <property type="project" value="RGD"/>
</dbReference>
<dbReference type="GO" id="GO:0036462">
    <property type="term" value="P:TRAIL-activated apoptotic signaling pathway"/>
    <property type="evidence" value="ECO:0000266"/>
    <property type="project" value="RGD"/>
</dbReference>
<dbReference type="GO" id="GO:0045815">
    <property type="term" value="P:transcription initiation-coupled chromatin remodeling"/>
    <property type="evidence" value="ECO:0000250"/>
    <property type="project" value="UniProtKB"/>
</dbReference>
<dbReference type="GO" id="GO:0007179">
    <property type="term" value="P:transforming growth factor beta receptor signaling pathway"/>
    <property type="evidence" value="ECO:0000266"/>
    <property type="project" value="RGD"/>
</dbReference>
<dbReference type="GO" id="GO:0001944">
    <property type="term" value="P:vasculature development"/>
    <property type="evidence" value="ECO:0000266"/>
    <property type="project" value="RGD"/>
</dbReference>
<dbReference type="FunFam" id="1.10.10.10:FF:000250">
    <property type="entry name" value="transcription factor Spi-B isoform X1"/>
    <property type="match status" value="1"/>
</dbReference>
<dbReference type="Gene3D" id="1.10.10.10">
    <property type="entry name" value="Winged helix-like DNA-binding domain superfamily/Winged helix DNA-binding domain"/>
    <property type="match status" value="1"/>
</dbReference>
<dbReference type="InterPro" id="IPR000418">
    <property type="entry name" value="Ets_dom"/>
</dbReference>
<dbReference type="InterPro" id="IPR046328">
    <property type="entry name" value="ETS_fam"/>
</dbReference>
<dbReference type="InterPro" id="IPR036388">
    <property type="entry name" value="WH-like_DNA-bd_sf"/>
</dbReference>
<dbReference type="InterPro" id="IPR036390">
    <property type="entry name" value="WH_DNA-bd_sf"/>
</dbReference>
<dbReference type="PANTHER" id="PTHR11849">
    <property type="entry name" value="ETS"/>
    <property type="match status" value="1"/>
</dbReference>
<dbReference type="PANTHER" id="PTHR11849:SF16">
    <property type="entry name" value="TRANSCRIPTION FACTOR PU.1"/>
    <property type="match status" value="1"/>
</dbReference>
<dbReference type="Pfam" id="PF00178">
    <property type="entry name" value="Ets"/>
    <property type="match status" value="1"/>
</dbReference>
<dbReference type="PRINTS" id="PR00454">
    <property type="entry name" value="ETSDOMAIN"/>
</dbReference>
<dbReference type="SMART" id="SM00413">
    <property type="entry name" value="ETS"/>
    <property type="match status" value="1"/>
</dbReference>
<dbReference type="SUPFAM" id="SSF46785">
    <property type="entry name" value="Winged helix' DNA-binding domain"/>
    <property type="match status" value="1"/>
</dbReference>
<dbReference type="PROSITE" id="PS00345">
    <property type="entry name" value="ETS_DOMAIN_1"/>
    <property type="match status" value="1"/>
</dbReference>
<dbReference type="PROSITE" id="PS00346">
    <property type="entry name" value="ETS_DOMAIN_2"/>
    <property type="match status" value="1"/>
</dbReference>
<dbReference type="PROSITE" id="PS50061">
    <property type="entry name" value="ETS_DOMAIN_3"/>
    <property type="match status" value="1"/>
</dbReference>
<proteinExistence type="evidence at protein level"/>
<feature type="chain" id="PRO_0000204135" description="Transcription factor PU.1">
    <location>
        <begin position="1"/>
        <end position="271"/>
    </location>
</feature>
<feature type="DNA-binding region" description="ETS" evidence="3">
    <location>
        <begin position="171"/>
        <end position="254"/>
    </location>
</feature>
<feature type="region of interest" description="Disordered" evidence="4">
    <location>
        <begin position="124"/>
        <end position="164"/>
    </location>
</feature>
<feature type="compositionally biased region" description="Low complexity" evidence="4">
    <location>
        <begin position="154"/>
        <end position="164"/>
    </location>
</feature>
<feature type="binding site" description="forms a salt bridge with the phosphate backbone of the opposite strand downstream of the GGAA core sequence" evidence="1">
    <location>
        <position position="218"/>
    </location>
    <ligand>
        <name>DNA</name>
        <dbReference type="ChEBI" id="CHEBI:16991"/>
    </ligand>
</feature>
<feature type="binding site" description="contacts bases in the GGAA sequence in the major groove" evidence="1">
    <location>
        <position position="231"/>
    </location>
    <ligand>
        <name>DNA</name>
        <dbReference type="ChEBI" id="CHEBI:16991"/>
    </ligand>
</feature>
<feature type="binding site" description="contacts bases in the GGAA sequence in the major groove" evidence="1">
    <location>
        <position position="234"/>
    </location>
    <ligand>
        <name>DNA</name>
        <dbReference type="ChEBI" id="CHEBI:16991"/>
    </ligand>
</feature>
<feature type="binding site" description="contacts the phosphate backbone of the GGAA sequence in the minor groove upstream" evidence="1">
    <location>
        <position position="244"/>
    </location>
    <ligand>
        <name>DNA</name>
        <dbReference type="ChEBI" id="CHEBI:16991"/>
    </ligand>
</feature>
<feature type="modified residue" description="Phosphoserine" evidence="2">
    <location>
        <position position="141"/>
    </location>
</feature>
<feature type="modified residue" description="Phosphoserine" evidence="2">
    <location>
        <position position="147"/>
    </location>
</feature>
<feature type="mutagenesis site" description="No effect on transcriptional activation of CSF1R or FCER1A promoter." evidence="5">
    <original>G</original>
    <variation>A</variation>
    <variation>S</variation>
    <location>
        <position position="41"/>
    </location>
</feature>
<feature type="mutagenesis site" description="No effect on transcriptional activation of CSF1R or FCER1A promoter." evidence="5">
    <original>S</original>
    <variation>A</variation>
    <location>
        <position position="45"/>
    </location>
</feature>
<accession>Q6BDS1</accession>
<accession>Q5BK69</accession>
<organism>
    <name type="scientific">Rattus norvegicus</name>
    <name type="common">Rat</name>
    <dbReference type="NCBI Taxonomy" id="10116"/>
    <lineage>
        <taxon>Eukaryota</taxon>
        <taxon>Metazoa</taxon>
        <taxon>Chordata</taxon>
        <taxon>Craniata</taxon>
        <taxon>Vertebrata</taxon>
        <taxon>Euteleostomi</taxon>
        <taxon>Mammalia</taxon>
        <taxon>Eutheria</taxon>
        <taxon>Euarchontoglires</taxon>
        <taxon>Glires</taxon>
        <taxon>Rodentia</taxon>
        <taxon>Myomorpha</taxon>
        <taxon>Muroidea</taxon>
        <taxon>Muridae</taxon>
        <taxon>Murinae</taxon>
        <taxon>Rattus</taxon>
    </lineage>
</organism>
<comment type="function">
    <text evidence="1 2 5">Pioneer transcription factor, which controls hematopoietic cell fate by decompacting stem cell heterochromatin and allowing other transcription factors to enter otherwise inaccessible genomic sites. Once in open chromatin, can directly control gene expression by binding genetic regulatory elements and can also more broadly influence transcription by recruiting transcription factors, such as interferon regulatory factors (IRFs), to otherwise inaccessible genomic regions (By similarity). Transcriptionally activates genes important for myeloid and lymphoid lineages, such as CSF1R or FCER1A (PubMed:15304324). Transcriptional activation from certain promoters, possibly containing low affinity binding sites, is achieved cooperatively with other transcription factors. FCER1A transactivation is achieved in cooperation with GATA1 (PubMed:15304324). May be particularly important for the pro- to pre-B cell transition. Binds (via the ETS domain) onto the purine-rich DNA core sequence 5'-GAGGAA-3', also known as the PU-box (By similarity). In vitro can bind RNA and interfere with pre-mRNA splicing (By similarity).</text>
</comment>
<comment type="activity regulation">
    <text evidence="1">Transcriptional activity at macrophage-specific genes is inhibited by interaction with GFI1, which results in the inhibition of SPI1-induced macrophage differentiation of myeloid progenitor cells, but not that of the granulocyte lineage.</text>
</comment>
<comment type="subunit">
    <text evidence="1 2">Binds DNA as a monomer. Can form homomers (By similarity). Directly interacts with CEBPD/NF-IL6-beta; this interaction does not affect DNA-binding properties of each partner. Interacts with NONO/p54(nrb) (By similarity). Interacts with RUNX1/AML1. Interacts with GFI1; the interaction represses SPI1 transcriptional activity, hence blocks SPI1-induced macrophage differentiation of myeloid progenitor cells. Interacts with CEBPE. Interacts with IRF4/Pip and IRF8. Interacts with JUN. Interacts with RB1. Interacts with TBP (By similarity).</text>
</comment>
<comment type="subcellular location">
    <subcellularLocation>
        <location evidence="3">Nucleus</location>
    </subcellularLocation>
</comment>
<comment type="similarity">
    <text evidence="6">Belongs to the ETS family.</text>
</comment>
<protein>
    <recommendedName>
        <fullName>Transcription factor PU.1</fullName>
    </recommendedName>
</protein>
<sequence>MLQACKMEGFPLVAPPSDELVTYESELYQRQTHDYYSLIGGDGDSHSDHYWDFSTHHVHSEFESFPENHFTELQSVQPPQLQQLYRHMELEQMHVLDTPMAPPHASLSHQVSYMPRVCFPYPPLSPAHQQSSDEEEGERQSPPLEVSDGEADGLEPGPGLLHGETGSKKKIRLYQFLLDLLRSGDMKDSIWWVDKDKGTFQFSSKHKEALAHRWGIQKGNRKKMTYQKMARALRNYGKTGEVKKVKKKLTYQFSGEVLGRGGLAERRLPPH</sequence>